<protein>
    <recommendedName>
        <fullName evidence="1">UDP-N-acetylmuramoylalanine--D-glutamate ligase</fullName>
        <ecNumber evidence="1">6.3.2.9</ecNumber>
    </recommendedName>
    <alternativeName>
        <fullName evidence="1">D-glutamic acid-adding enzyme</fullName>
    </alternativeName>
    <alternativeName>
        <fullName evidence="1">UDP-N-acetylmuramoyl-L-alanyl-D-glutamate synthetase</fullName>
    </alternativeName>
</protein>
<dbReference type="EC" id="6.3.2.9" evidence="1"/>
<dbReference type="EMBL" id="AP006627">
    <property type="protein sequence ID" value="BAD64892.1"/>
    <property type="molecule type" value="Genomic_DNA"/>
</dbReference>
<dbReference type="RefSeq" id="WP_011247200.1">
    <property type="nucleotide sequence ID" value="NC_006582.1"/>
</dbReference>
<dbReference type="SMR" id="Q5WFG8"/>
<dbReference type="STRING" id="66692.ABC2357"/>
<dbReference type="KEGG" id="bcl:ABC2357"/>
<dbReference type="eggNOG" id="COG0771">
    <property type="taxonomic scope" value="Bacteria"/>
</dbReference>
<dbReference type="HOGENOM" id="CLU_032540_0_1_9"/>
<dbReference type="OrthoDB" id="9809796at2"/>
<dbReference type="UniPathway" id="UPA00219"/>
<dbReference type="Proteomes" id="UP000001168">
    <property type="component" value="Chromosome"/>
</dbReference>
<dbReference type="GO" id="GO:0005737">
    <property type="term" value="C:cytoplasm"/>
    <property type="evidence" value="ECO:0007669"/>
    <property type="project" value="UniProtKB-SubCell"/>
</dbReference>
<dbReference type="GO" id="GO:0005524">
    <property type="term" value="F:ATP binding"/>
    <property type="evidence" value="ECO:0007669"/>
    <property type="project" value="UniProtKB-UniRule"/>
</dbReference>
<dbReference type="GO" id="GO:0008764">
    <property type="term" value="F:UDP-N-acetylmuramoylalanine-D-glutamate ligase activity"/>
    <property type="evidence" value="ECO:0007669"/>
    <property type="project" value="UniProtKB-UniRule"/>
</dbReference>
<dbReference type="GO" id="GO:0051301">
    <property type="term" value="P:cell division"/>
    <property type="evidence" value="ECO:0007669"/>
    <property type="project" value="UniProtKB-KW"/>
</dbReference>
<dbReference type="GO" id="GO:0071555">
    <property type="term" value="P:cell wall organization"/>
    <property type="evidence" value="ECO:0007669"/>
    <property type="project" value="UniProtKB-KW"/>
</dbReference>
<dbReference type="GO" id="GO:0009252">
    <property type="term" value="P:peptidoglycan biosynthetic process"/>
    <property type="evidence" value="ECO:0007669"/>
    <property type="project" value="UniProtKB-UniRule"/>
</dbReference>
<dbReference type="GO" id="GO:0008360">
    <property type="term" value="P:regulation of cell shape"/>
    <property type="evidence" value="ECO:0007669"/>
    <property type="project" value="UniProtKB-KW"/>
</dbReference>
<dbReference type="Gene3D" id="3.90.190.20">
    <property type="entry name" value="Mur ligase, C-terminal domain"/>
    <property type="match status" value="1"/>
</dbReference>
<dbReference type="Gene3D" id="3.40.1190.10">
    <property type="entry name" value="Mur-like, catalytic domain"/>
    <property type="match status" value="1"/>
</dbReference>
<dbReference type="Gene3D" id="3.40.50.720">
    <property type="entry name" value="NAD(P)-binding Rossmann-like Domain"/>
    <property type="match status" value="1"/>
</dbReference>
<dbReference type="HAMAP" id="MF_00639">
    <property type="entry name" value="MurD"/>
    <property type="match status" value="1"/>
</dbReference>
<dbReference type="InterPro" id="IPR036565">
    <property type="entry name" value="Mur-like_cat_sf"/>
</dbReference>
<dbReference type="InterPro" id="IPR004101">
    <property type="entry name" value="Mur_ligase_C"/>
</dbReference>
<dbReference type="InterPro" id="IPR036615">
    <property type="entry name" value="Mur_ligase_C_dom_sf"/>
</dbReference>
<dbReference type="InterPro" id="IPR013221">
    <property type="entry name" value="Mur_ligase_cen"/>
</dbReference>
<dbReference type="InterPro" id="IPR005762">
    <property type="entry name" value="MurD"/>
</dbReference>
<dbReference type="NCBIfam" id="TIGR01087">
    <property type="entry name" value="murD"/>
    <property type="match status" value="1"/>
</dbReference>
<dbReference type="PANTHER" id="PTHR43692">
    <property type="entry name" value="UDP-N-ACETYLMURAMOYLALANINE--D-GLUTAMATE LIGASE"/>
    <property type="match status" value="1"/>
</dbReference>
<dbReference type="PANTHER" id="PTHR43692:SF1">
    <property type="entry name" value="UDP-N-ACETYLMURAMOYLALANINE--D-GLUTAMATE LIGASE"/>
    <property type="match status" value="1"/>
</dbReference>
<dbReference type="Pfam" id="PF02875">
    <property type="entry name" value="Mur_ligase_C"/>
    <property type="match status" value="1"/>
</dbReference>
<dbReference type="Pfam" id="PF08245">
    <property type="entry name" value="Mur_ligase_M"/>
    <property type="match status" value="1"/>
</dbReference>
<dbReference type="Pfam" id="PF21799">
    <property type="entry name" value="MurD-like_N"/>
    <property type="match status" value="1"/>
</dbReference>
<dbReference type="SUPFAM" id="SSF51984">
    <property type="entry name" value="MurCD N-terminal domain"/>
    <property type="match status" value="1"/>
</dbReference>
<dbReference type="SUPFAM" id="SSF53623">
    <property type="entry name" value="MurD-like peptide ligases, catalytic domain"/>
    <property type="match status" value="1"/>
</dbReference>
<dbReference type="SUPFAM" id="SSF53244">
    <property type="entry name" value="MurD-like peptide ligases, peptide-binding domain"/>
    <property type="match status" value="1"/>
</dbReference>
<name>MURD_SHOC1</name>
<comment type="function">
    <text evidence="1">Cell wall formation. Catalyzes the addition of glutamate to the nucleotide precursor UDP-N-acetylmuramoyl-L-alanine (UMA).</text>
</comment>
<comment type="catalytic activity">
    <reaction evidence="1">
        <text>UDP-N-acetyl-alpha-D-muramoyl-L-alanine + D-glutamate + ATP = UDP-N-acetyl-alpha-D-muramoyl-L-alanyl-D-glutamate + ADP + phosphate + H(+)</text>
        <dbReference type="Rhea" id="RHEA:16429"/>
        <dbReference type="ChEBI" id="CHEBI:15378"/>
        <dbReference type="ChEBI" id="CHEBI:29986"/>
        <dbReference type="ChEBI" id="CHEBI:30616"/>
        <dbReference type="ChEBI" id="CHEBI:43474"/>
        <dbReference type="ChEBI" id="CHEBI:83898"/>
        <dbReference type="ChEBI" id="CHEBI:83900"/>
        <dbReference type="ChEBI" id="CHEBI:456216"/>
        <dbReference type="EC" id="6.3.2.9"/>
    </reaction>
</comment>
<comment type="pathway">
    <text evidence="1">Cell wall biogenesis; peptidoglycan biosynthesis.</text>
</comment>
<comment type="subcellular location">
    <subcellularLocation>
        <location evidence="1">Cytoplasm</location>
    </subcellularLocation>
</comment>
<comment type="similarity">
    <text evidence="1">Belongs to the MurCDEF family.</text>
</comment>
<reference key="1">
    <citation type="submission" date="2003-10" db="EMBL/GenBank/DDBJ databases">
        <title>The complete genome sequence of the alkaliphilic Bacillus clausii KSM-K16.</title>
        <authorList>
            <person name="Takaki Y."/>
            <person name="Kageyama Y."/>
            <person name="Shimamura S."/>
            <person name="Suzuki H."/>
            <person name="Nishi S."/>
            <person name="Hatada Y."/>
            <person name="Kawai S."/>
            <person name="Ito S."/>
            <person name="Horikoshi K."/>
        </authorList>
    </citation>
    <scope>NUCLEOTIDE SEQUENCE [LARGE SCALE GENOMIC DNA]</scope>
    <source>
        <strain>KSM-K16</strain>
    </source>
</reference>
<keyword id="KW-0067">ATP-binding</keyword>
<keyword id="KW-0131">Cell cycle</keyword>
<keyword id="KW-0132">Cell division</keyword>
<keyword id="KW-0133">Cell shape</keyword>
<keyword id="KW-0961">Cell wall biogenesis/degradation</keyword>
<keyword id="KW-0963">Cytoplasm</keyword>
<keyword id="KW-0436">Ligase</keyword>
<keyword id="KW-0547">Nucleotide-binding</keyword>
<keyword id="KW-0573">Peptidoglycan synthesis</keyword>
<keyword id="KW-1185">Reference proteome</keyword>
<evidence type="ECO:0000255" key="1">
    <source>
        <dbReference type="HAMAP-Rule" id="MF_00639"/>
    </source>
</evidence>
<proteinExistence type="inferred from homology"/>
<organism>
    <name type="scientific">Shouchella clausii (strain KSM-K16)</name>
    <name type="common">Alkalihalobacillus clausii</name>
    <dbReference type="NCBI Taxonomy" id="66692"/>
    <lineage>
        <taxon>Bacteria</taxon>
        <taxon>Bacillati</taxon>
        <taxon>Bacillota</taxon>
        <taxon>Bacilli</taxon>
        <taxon>Bacillales</taxon>
        <taxon>Bacillaceae</taxon>
        <taxon>Shouchella</taxon>
    </lineage>
</organism>
<gene>
    <name evidence="1" type="primary">murD</name>
    <name type="ordered locus">ABC2357</name>
</gene>
<sequence length="451" mass="48186">MKQVKELIGKRVLVLGMAKSGVASALLLARIGAEVVINDSKSRADQPQAGELEAAGIQVVCGGHPLTVLDGCSLLVKNPGIPYTNIVVKEAEARGIPIWTEIELAYLISEAEMVAITGSNGKTTTTTLVKEMLEHSGRKPLIAGNIGTVASEVAQKAKAEHVIVLEVSSFQLMGTNAFQPKVAVWLNIFDAHLDYHGTREDYIAAKARIAANMGPADYLVYNADDPTVVQAIARIGATLVPFSRINVVEDGAYVKDGTIFFKDEPILALADAVLPGAHNVENMLAATAAARLAGATVEQIRHVLSHFPGVKHRLQYVGSWEGRQFYNDSKATNILATKAALSGFAKPVVLIAGGLDRGNDFDELLASLKYVKAVVAYGETKSKLLALAAKANVQAVTAERVQDATEKAVALSQPGDVVLLSPACASWDQYRSFEERGDEFLDYVNTIIKPS</sequence>
<accession>Q5WFG8</accession>
<feature type="chain" id="PRO_0000108963" description="UDP-N-acetylmuramoylalanine--D-glutamate ligase">
    <location>
        <begin position="1"/>
        <end position="451"/>
    </location>
</feature>
<feature type="binding site" evidence="1">
    <location>
        <begin position="118"/>
        <end position="124"/>
    </location>
    <ligand>
        <name>ATP</name>
        <dbReference type="ChEBI" id="CHEBI:30616"/>
    </ligand>
</feature>